<sequence length="510" mass="55973">MQEPREQTLSQVNNPDASDEKPETSSLASNLSMSEEIMTCTDYIPRSSNDYTSQMYSAKPYAHILSVPVSETTYPGQTQYQTLQQSQPYAVYPQATQTYGLPPFASSTNASLIPTSSAIANIPAAAVASISNQDYPTYTILGQNQYQACYPSSSFGVTGQTNSDAETTTLAATTYQTEKPSAMVPAPATQRLPSDSSASPPLSQTTPNKDADDQARKNMTVKNRGKRKADASSSQDSELERVFLWDLDETIIIFHSLLTGSYAQKYGKDPTVVIGSGLTMEEMIFEVADTHLFFNDLEECDQVHVEDVASDDNGQDLSNYSFSTDGFSGSGGSGSHGSSVGVQGGVDWMRKLAFRYRKVREIYDKHKSNVGGLLSPQRKEALQRLRAEIEVLTDSWLGTALKSLLLIQSRKNCANVLITTTQLVPALAKVLLYGLGEIFPIENIYSATKIGKESCFERIVSRFGKKVTYVVIGDGRDEEIAAKQHNMPFWRITNHGDLVSLHQALELDFL</sequence>
<dbReference type="EC" id="3.1.3.48" evidence="7 8 9"/>
<dbReference type="EMBL" id="U81604">
    <property type="protein sequence ID" value="AAB42068.1"/>
    <property type="molecule type" value="mRNA"/>
</dbReference>
<dbReference type="EMBL" id="U61112">
    <property type="protein sequence ID" value="AAB48019.1"/>
    <property type="molecule type" value="mRNA"/>
</dbReference>
<dbReference type="EMBL" id="AL627130">
    <property type="status" value="NOT_ANNOTATED_CDS"/>
    <property type="molecule type" value="Genomic_DNA"/>
</dbReference>
<dbReference type="EMBL" id="CH466552">
    <property type="protein sequence ID" value="EDL30095.1"/>
    <property type="molecule type" value="Genomic_DNA"/>
</dbReference>
<dbReference type="EMBL" id="AJ007996">
    <property type="protein sequence ID" value="CAA07819.1"/>
    <property type="molecule type" value="mRNA"/>
</dbReference>
<dbReference type="CCDS" id="CCDS18730.1">
    <molecule id="P97480-1"/>
</dbReference>
<dbReference type="CCDS" id="CCDS18731.1">
    <molecule id="P97480-2"/>
</dbReference>
<dbReference type="RefSeq" id="NP_034296.2">
    <molecule id="P97480-1"/>
    <property type="nucleotide sequence ID" value="NM_010166.3"/>
</dbReference>
<dbReference type="RefSeq" id="NP_997596.1">
    <molecule id="P97480-2"/>
    <property type="nucleotide sequence ID" value="NM_211357.3"/>
</dbReference>
<dbReference type="SMR" id="P97480"/>
<dbReference type="BioGRID" id="199561">
    <property type="interactions" value="4"/>
</dbReference>
<dbReference type="CORUM" id="P97480"/>
<dbReference type="FunCoup" id="P97480">
    <property type="interactions" value="2945"/>
</dbReference>
<dbReference type="IntAct" id="P97480">
    <property type="interactions" value="4"/>
</dbReference>
<dbReference type="MINT" id="P97480"/>
<dbReference type="STRING" id="10090.ENSMUSP00000080425"/>
<dbReference type="BindingDB" id="P97480"/>
<dbReference type="ChEMBL" id="CHEMBL4296244"/>
<dbReference type="DrugCentral" id="P97480"/>
<dbReference type="iPTMnet" id="P97480"/>
<dbReference type="PhosphoSitePlus" id="P97480"/>
<dbReference type="PaxDb" id="10090-ENSMUSP00000080425"/>
<dbReference type="PeptideAtlas" id="P97480"/>
<dbReference type="ProteomicsDB" id="275707">
    <molecule id="P97480-1"/>
</dbReference>
<dbReference type="ProteomicsDB" id="275708">
    <molecule id="P97480-2"/>
</dbReference>
<dbReference type="Pumba" id="P97480"/>
<dbReference type="Antibodypedia" id="16480">
    <property type="antibodies" value="163 antibodies from 27 providers"/>
</dbReference>
<dbReference type="DNASU" id="14050"/>
<dbReference type="Ensembl" id="ENSMUST00000020197.14">
    <molecule id="P97480-2"/>
    <property type="protein sequence ID" value="ENSMUSP00000020197.8"/>
    <property type="gene ID" value="ENSMUSG00000028886.16"/>
</dbReference>
<dbReference type="Ensembl" id="ENSMUST00000079157.11">
    <molecule id="P97480-1"/>
    <property type="protein sequence ID" value="ENSMUSP00000078157.5"/>
    <property type="gene ID" value="ENSMUSG00000028886.16"/>
</dbReference>
<dbReference type="Ensembl" id="ENSMUST00000180250.8">
    <molecule id="P97480-2"/>
    <property type="protein sequence ID" value="ENSMUSP00000136812.2"/>
    <property type="gene ID" value="ENSMUSG00000028886.16"/>
</dbReference>
<dbReference type="GeneID" id="14050"/>
<dbReference type="KEGG" id="mmu:14050"/>
<dbReference type="UCSC" id="uc008vbo.2">
    <molecule id="P97480-1"/>
    <property type="organism name" value="mouse"/>
</dbReference>
<dbReference type="UCSC" id="uc008vbq.2">
    <molecule id="P97480-2"/>
    <property type="organism name" value="mouse"/>
</dbReference>
<dbReference type="AGR" id="MGI:109339"/>
<dbReference type="CTD" id="2140"/>
<dbReference type="MGI" id="MGI:109339">
    <property type="gene designation" value="Eya3"/>
</dbReference>
<dbReference type="VEuPathDB" id="HostDB:ENSMUSG00000028886"/>
<dbReference type="eggNOG" id="KOG3107">
    <property type="taxonomic scope" value="Eukaryota"/>
</dbReference>
<dbReference type="GeneTree" id="ENSGT00950000182978"/>
<dbReference type="HOGENOM" id="CLU_021184_2_0_1"/>
<dbReference type="InParanoid" id="P97480"/>
<dbReference type="OrthoDB" id="167668at2759"/>
<dbReference type="Reactome" id="R-MMU-5693565">
    <property type="pathway name" value="Recruitment and ATM-mediated phosphorylation of repair and signaling proteins at DNA double strand breaks"/>
</dbReference>
<dbReference type="SABIO-RK" id="P97480"/>
<dbReference type="BioGRID-ORCS" id="14050">
    <property type="hits" value="2 hits in 116 CRISPR screens"/>
</dbReference>
<dbReference type="ChiTaRS" id="Eya3">
    <property type="organism name" value="mouse"/>
</dbReference>
<dbReference type="PRO" id="PR:P97480"/>
<dbReference type="Proteomes" id="UP000000589">
    <property type="component" value="Chromosome 4"/>
</dbReference>
<dbReference type="RNAct" id="P97480">
    <property type="molecule type" value="protein"/>
</dbReference>
<dbReference type="Bgee" id="ENSMUSG00000028886">
    <property type="expression patterns" value="Expressed in undifferentiated genital tubercle and 267 other cell types or tissues"/>
</dbReference>
<dbReference type="ExpressionAtlas" id="P97480">
    <property type="expression patterns" value="baseline and differential"/>
</dbReference>
<dbReference type="GO" id="GO:0005737">
    <property type="term" value="C:cytoplasm"/>
    <property type="evidence" value="ECO:0007669"/>
    <property type="project" value="UniProtKB-SubCell"/>
</dbReference>
<dbReference type="GO" id="GO:0005634">
    <property type="term" value="C:nucleus"/>
    <property type="evidence" value="ECO:0000314"/>
    <property type="project" value="MGI"/>
</dbReference>
<dbReference type="GO" id="GO:0005667">
    <property type="term" value="C:transcription regulator complex"/>
    <property type="evidence" value="ECO:0000353"/>
    <property type="project" value="MGI"/>
</dbReference>
<dbReference type="GO" id="GO:0003682">
    <property type="term" value="F:chromatin binding"/>
    <property type="evidence" value="ECO:0000316"/>
    <property type="project" value="MGI"/>
</dbReference>
<dbReference type="GO" id="GO:0140793">
    <property type="term" value="F:histone H2AXY142 phosphatase activity"/>
    <property type="evidence" value="ECO:0000250"/>
    <property type="project" value="UniProtKB"/>
</dbReference>
<dbReference type="GO" id="GO:0046872">
    <property type="term" value="F:metal ion binding"/>
    <property type="evidence" value="ECO:0007669"/>
    <property type="project" value="UniProtKB-KW"/>
</dbReference>
<dbReference type="GO" id="GO:0004725">
    <property type="term" value="F:protein tyrosine phosphatase activity"/>
    <property type="evidence" value="ECO:0000314"/>
    <property type="project" value="MGI"/>
</dbReference>
<dbReference type="GO" id="GO:0008138">
    <property type="term" value="F:protein tyrosine/serine/threonine phosphatase activity"/>
    <property type="evidence" value="ECO:0000314"/>
    <property type="project" value="MGI"/>
</dbReference>
<dbReference type="GO" id="GO:0006302">
    <property type="term" value="P:double-strand break repair"/>
    <property type="evidence" value="ECO:0000250"/>
    <property type="project" value="UniProtKB"/>
</dbReference>
<dbReference type="GO" id="GO:0045739">
    <property type="term" value="P:positive regulation of DNA repair"/>
    <property type="evidence" value="ECO:0000250"/>
    <property type="project" value="UniProtKB"/>
</dbReference>
<dbReference type="GO" id="GO:0010212">
    <property type="term" value="P:response to ionizing radiation"/>
    <property type="evidence" value="ECO:0000250"/>
    <property type="project" value="UniProtKB"/>
</dbReference>
<dbReference type="CDD" id="cd02601">
    <property type="entry name" value="HAD_Eya"/>
    <property type="match status" value="1"/>
</dbReference>
<dbReference type="FunFam" id="3.40.50.12350:FF:000002">
    <property type="entry name" value="Eyes absent homolog"/>
    <property type="match status" value="1"/>
</dbReference>
<dbReference type="Gene3D" id="3.40.50.12350">
    <property type="match status" value="1"/>
</dbReference>
<dbReference type="InterPro" id="IPR028472">
    <property type="entry name" value="EYA"/>
</dbReference>
<dbReference type="InterPro" id="IPR006545">
    <property type="entry name" value="EYA_dom"/>
</dbReference>
<dbReference type="InterPro" id="IPR042577">
    <property type="entry name" value="EYA_dom_metazoan"/>
</dbReference>
<dbReference type="InterPro" id="IPR038102">
    <property type="entry name" value="EYA_dom_sf"/>
</dbReference>
<dbReference type="NCBIfam" id="TIGR01658">
    <property type="entry name" value="EYA-cons_domain"/>
    <property type="match status" value="1"/>
</dbReference>
<dbReference type="PANTHER" id="PTHR10190">
    <property type="entry name" value="EYES ABSENT"/>
    <property type="match status" value="1"/>
</dbReference>
<dbReference type="PANTHER" id="PTHR10190:SF5">
    <property type="entry name" value="EYES ABSENT HOMOLOG 3"/>
    <property type="match status" value="1"/>
</dbReference>
<dbReference type="Pfam" id="PF00702">
    <property type="entry name" value="Hydrolase"/>
    <property type="match status" value="1"/>
</dbReference>
<dbReference type="SFLD" id="SFLDG01129">
    <property type="entry name" value="C1.5:_HAD__Beta-PGM__Phosphata"/>
    <property type="match status" value="1"/>
</dbReference>
<dbReference type="SFLD" id="SFLDS00003">
    <property type="entry name" value="Haloacid_Dehalogenase"/>
    <property type="match status" value="1"/>
</dbReference>
<comment type="function">
    <text evidence="3 5">Tyrosine phosphatase that specifically dephosphorylates 'Tyr-142' of histone H2AX (H2AXY142ph). 'Tyr-142' phosphorylation of histone H2AX plays a central role in DNA repair and acts as a mark that distinguishes between apoptotic and repair responses to genotoxic stress. Promotes efficient DNA repair by dephosphorylating H2AX, promoting the recruitment of DNA repair complexes containing MDC1 (By similarity). Its function as histone phosphatase probably explains its role in transcription regulation during organogenesis. The phosphatase activity has been shown in vitro. Coactivates SIX1. Seems to coactivate SIX2, SIX4 and SIX5. The repression of precursor cell proliferation in myoblasts by SIX1 is switched to activation through recruitment of EYA3 to the SIX1-DACH1 complex and seems to be dependent on EYA3 phosphatase activity. May be involved in development of the eye. May play a role in mediating the induction and differentiation of cranial placodes.</text>
</comment>
<comment type="catalytic activity">
    <reaction evidence="7 8 9">
        <text>O-phospho-L-tyrosyl-[protein] + H2O = L-tyrosyl-[protein] + phosphate</text>
        <dbReference type="Rhea" id="RHEA:10684"/>
        <dbReference type="Rhea" id="RHEA-COMP:10136"/>
        <dbReference type="Rhea" id="RHEA-COMP:20101"/>
        <dbReference type="ChEBI" id="CHEBI:15377"/>
        <dbReference type="ChEBI" id="CHEBI:43474"/>
        <dbReference type="ChEBI" id="CHEBI:46858"/>
        <dbReference type="ChEBI" id="CHEBI:61978"/>
        <dbReference type="EC" id="3.1.3.48"/>
    </reaction>
</comment>
<comment type="cofactor">
    <cofactor evidence="2">
        <name>Mg(2+)</name>
        <dbReference type="ChEBI" id="CHEBI:18420"/>
    </cofactor>
    <text evidence="2">Binds 1 Mg(2+) ion per subunit.</text>
</comment>
<comment type="subunit">
    <text evidence="5 6 7">Interacts with SIX1 and DACH1, and probably SIX2, SIX4 and SIX5.</text>
</comment>
<comment type="subcellular location">
    <subcellularLocation>
        <location evidence="5">Cytoplasm</location>
    </subcellularLocation>
    <subcellularLocation>
        <location evidence="5 8">Nucleus</location>
    </subcellularLocation>
    <text evidence="3">Localizes at sites of DNA damage at double-strand breaks (DSBs).</text>
</comment>
<comment type="alternative products">
    <event type="alternative splicing"/>
    <isoform>
        <id>P97480-1</id>
        <name>1</name>
        <sequence type="displayed"/>
    </isoform>
    <isoform>
        <id>P97480-2</id>
        <name>2</name>
        <sequence type="described" ref="VSP_001494"/>
    </isoform>
</comment>
<comment type="tissue specificity">
    <text>Expressed in branchial arches, CNS and developing eye.</text>
</comment>
<comment type="PTM">
    <text evidence="1">Ser-203 phosphorylation is required for localization at sites of DNA damage and directing interaction with H2AX.</text>
</comment>
<comment type="similarity">
    <text evidence="11">Belongs to the HAD-like hydrolase superfamily. EYA family.</text>
</comment>
<comment type="caution">
    <text evidence="11">According to PubMed:14628042 also shows serine/threonine protein phosphatase activity.</text>
</comment>
<accession>P97480</accession>
<accession>G5E8I5</accession>
<accession>P97768</accession>
<gene>
    <name type="primary">Eya3</name>
</gene>
<name>EYA3_MOUSE</name>
<feature type="chain" id="PRO_0000218649" description="Protein phosphatase EYA3">
    <location>
        <begin position="1"/>
        <end position="510"/>
    </location>
</feature>
<feature type="region of interest" description="Disordered" evidence="4">
    <location>
        <begin position="1"/>
        <end position="32"/>
    </location>
</feature>
<feature type="region of interest" description="Disordered" evidence="4">
    <location>
        <begin position="175"/>
        <end position="233"/>
    </location>
</feature>
<feature type="compositionally biased region" description="Polar residues" evidence="4">
    <location>
        <begin position="7"/>
        <end position="16"/>
    </location>
</feature>
<feature type="compositionally biased region" description="Low complexity" evidence="4">
    <location>
        <begin position="192"/>
        <end position="203"/>
    </location>
</feature>
<feature type="active site" description="Nucleophile" evidence="2">
    <location>
        <position position="246"/>
    </location>
</feature>
<feature type="active site" description="Proton donor" evidence="2">
    <location>
        <position position="248"/>
    </location>
</feature>
<feature type="binding site" evidence="2">
    <location>
        <position position="246"/>
    </location>
    <ligand>
        <name>Mg(2+)</name>
        <dbReference type="ChEBI" id="CHEBI:18420"/>
    </ligand>
</feature>
<feature type="binding site" evidence="2">
    <location>
        <position position="248"/>
    </location>
    <ligand>
        <name>Mg(2+)</name>
        <dbReference type="ChEBI" id="CHEBI:18420"/>
    </ligand>
</feature>
<feature type="binding site" evidence="2">
    <location>
        <position position="474"/>
    </location>
    <ligand>
        <name>Mg(2+)</name>
        <dbReference type="ChEBI" id="CHEBI:18420"/>
    </ligand>
</feature>
<feature type="modified residue" description="Phosphoserine" evidence="3">
    <location>
        <position position="199"/>
    </location>
</feature>
<feature type="modified residue" description="Phosphoserine" evidence="3">
    <location>
        <position position="203"/>
    </location>
</feature>
<feature type="modified residue" description="Phosphoserine" evidence="3">
    <location>
        <position position="375"/>
    </location>
</feature>
<feature type="modified residue" description="Phosphoserine" evidence="3">
    <location>
        <position position="409"/>
    </location>
</feature>
<feature type="splice variant" id="VSP_001494" description="In isoform 2." evidence="10">
    <original>MQEPREQTLSQVNNPDASDEKPETSSLASNLSMSEEIMTCTDYIPRSSNDYTSQMYSAKPYAHILSVPVSETTYPGQTQYQTLQQSQPYAVYPQATQTYGLPPFA</original>
    <variation>MIIPHKCILQT</variation>
    <location>
        <begin position="1"/>
        <end position="105"/>
    </location>
</feature>
<feature type="mutagenesis site" description="Abolishes phosphatase activity and abolishes coactivation of the SIX1-DACH1 complex." evidence="7 8 9">
    <original>D</original>
    <variation>A</variation>
    <location>
        <position position="246"/>
    </location>
</feature>
<feature type="mutagenesis site" description="Abolishes phosphatase activity." evidence="7 8 9">
    <original>D</original>
    <variation>N</variation>
    <location>
        <position position="246"/>
    </location>
</feature>
<feature type="mutagenesis site" description="Abolishes phosphatase activity." evidence="8">
    <original>D</original>
    <variation>N</variation>
    <location>
        <position position="248"/>
    </location>
</feature>
<feature type="mutagenesis site" description="Abolishes phosphatase activity." evidence="8">
    <original>T</original>
    <variation>A</variation>
    <location>
        <position position="250"/>
    </location>
</feature>
<feature type="mutagenesis site" description="Diminishes phosphatase activity by 24-fold." evidence="8">
    <original>T</original>
    <variation>A</variation>
    <location>
        <position position="419"/>
    </location>
</feature>
<feature type="mutagenesis site" description="Diminishes phosphatase activity." evidence="9">
    <original>T</original>
    <variation>A</variation>
    <location>
        <position position="420"/>
    </location>
</feature>
<feature type="mutagenesis site" description="Abolishes phosphatase activity." evidence="9">
    <original>K</original>
    <variation>Q</variation>
    <location>
        <position position="449"/>
    </location>
</feature>
<feature type="mutagenesis site" description="Abolishes phosphatase activity." evidence="8">
    <original>G</original>
    <variation>A</variation>
    <location>
        <position position="473"/>
    </location>
</feature>
<feature type="mutagenesis site" description="Diminishes phosphatase activity by 70%." evidence="8 9">
    <original>D</original>
    <variation>N</variation>
    <location>
        <position position="474"/>
    </location>
</feature>
<feature type="mutagenesis site" description="Abolishes phosphatase activity." evidence="8 9">
    <original>E</original>
    <variation>Q</variation>
    <location>
        <position position="478"/>
    </location>
</feature>
<feature type="sequence conflict" description="In Ref. 2; AAB48019." evidence="11" ref="2">
    <original>P</original>
    <variation>L</variation>
    <location>
        <position position="200"/>
    </location>
</feature>
<feature type="sequence conflict" description="In Ref. 1; AAB42068." evidence="11" ref="1">
    <original>V</original>
    <variation>A</variation>
    <location>
        <position position="272"/>
    </location>
</feature>
<keyword id="KW-0010">Activator</keyword>
<keyword id="KW-0025">Alternative splicing</keyword>
<keyword id="KW-0156">Chromatin regulator</keyword>
<keyword id="KW-0963">Cytoplasm</keyword>
<keyword id="KW-0217">Developmental protein</keyword>
<keyword id="KW-0227">DNA damage</keyword>
<keyword id="KW-0234">DNA repair</keyword>
<keyword id="KW-0378">Hydrolase</keyword>
<keyword id="KW-0460">Magnesium</keyword>
<keyword id="KW-0479">Metal-binding</keyword>
<keyword id="KW-0539">Nucleus</keyword>
<keyword id="KW-0597">Phosphoprotein</keyword>
<keyword id="KW-0904">Protein phosphatase</keyword>
<keyword id="KW-1185">Reference proteome</keyword>
<keyword id="KW-0804">Transcription</keyword>
<keyword id="KW-0805">Transcription regulation</keyword>
<organism>
    <name type="scientific">Mus musculus</name>
    <name type="common">Mouse</name>
    <dbReference type="NCBI Taxonomy" id="10090"/>
    <lineage>
        <taxon>Eukaryota</taxon>
        <taxon>Metazoa</taxon>
        <taxon>Chordata</taxon>
        <taxon>Craniata</taxon>
        <taxon>Vertebrata</taxon>
        <taxon>Euteleostomi</taxon>
        <taxon>Mammalia</taxon>
        <taxon>Eutheria</taxon>
        <taxon>Euarchontoglires</taxon>
        <taxon>Glires</taxon>
        <taxon>Rodentia</taxon>
        <taxon>Myomorpha</taxon>
        <taxon>Muroidea</taxon>
        <taxon>Muridae</taxon>
        <taxon>Murinae</taxon>
        <taxon>Mus</taxon>
        <taxon>Mus</taxon>
    </lineage>
</organism>
<protein>
    <recommendedName>
        <fullName evidence="11">Protein phosphatase EYA3</fullName>
        <ecNumber evidence="7 8 9">3.1.3.48</ecNumber>
    </recommendedName>
    <alternativeName>
        <fullName>Eyes absent homolog 3</fullName>
    </alternativeName>
</protein>
<proteinExistence type="evidence at protein level"/>
<reference key="1">
    <citation type="journal article" date="1997" name="Genome Res.">
        <title>Cloning and characterization of two vertebrate homologs of the Drosophila eyes absent gene.</title>
        <authorList>
            <person name="Zimmerman J.E."/>
            <person name="Bui Q.T."/>
            <person name="Steingrimsson E."/>
            <person name="Nagle D.L."/>
            <person name="Fu W."/>
            <person name="Genin A."/>
            <person name="Spinner N.B."/>
            <person name="Copeland N.G."/>
            <person name="Jenkins N.A."/>
            <person name="Bucan M."/>
            <person name="Bonini N.M."/>
        </authorList>
    </citation>
    <scope>NUCLEOTIDE SEQUENCE [MRNA] (ISOFORM 1)</scope>
    <source>
        <tissue>Embryo</tissue>
    </source>
</reference>
<reference key="2">
    <citation type="journal article" date="1997" name="Development">
        <title>Mouse Eya homologues of the Drosophila eyes absent gene require Pax6 for expression in lens and nasal placode.</title>
        <authorList>
            <person name="Xu P.-X."/>
            <person name="Woo I."/>
            <person name="Her H."/>
            <person name="Beier D.R."/>
            <person name="Maas R.L."/>
        </authorList>
    </citation>
    <scope>NUCLEOTIDE SEQUENCE [MRNA] (ISOFORM 2)</scope>
    <source>
        <tissue>Embryo</tissue>
    </source>
</reference>
<reference key="3">
    <citation type="journal article" date="2009" name="PLoS Biol.">
        <title>Lineage-specific biology revealed by a finished genome assembly of the mouse.</title>
        <authorList>
            <person name="Church D.M."/>
            <person name="Goodstadt L."/>
            <person name="Hillier L.W."/>
            <person name="Zody M.C."/>
            <person name="Goldstein S."/>
            <person name="She X."/>
            <person name="Bult C.J."/>
            <person name="Agarwala R."/>
            <person name="Cherry J.L."/>
            <person name="DiCuccio M."/>
            <person name="Hlavina W."/>
            <person name="Kapustin Y."/>
            <person name="Meric P."/>
            <person name="Maglott D."/>
            <person name="Birtle Z."/>
            <person name="Marques A.C."/>
            <person name="Graves T."/>
            <person name="Zhou S."/>
            <person name="Teague B."/>
            <person name="Potamousis K."/>
            <person name="Churas C."/>
            <person name="Place M."/>
            <person name="Herschleb J."/>
            <person name="Runnheim R."/>
            <person name="Forrest D."/>
            <person name="Amos-Landgraf J."/>
            <person name="Schwartz D.C."/>
            <person name="Cheng Z."/>
            <person name="Lindblad-Toh K."/>
            <person name="Eichler E.E."/>
            <person name="Ponting C.P."/>
        </authorList>
    </citation>
    <scope>NUCLEOTIDE SEQUENCE [LARGE SCALE GENOMIC DNA]</scope>
    <source>
        <strain>C57BL/6J</strain>
    </source>
</reference>
<reference key="4">
    <citation type="submission" date="2005-07" db="EMBL/GenBank/DDBJ databases">
        <authorList>
            <person name="Mural R.J."/>
            <person name="Adams M.D."/>
            <person name="Myers E.W."/>
            <person name="Smith H.O."/>
            <person name="Venter J.C."/>
        </authorList>
    </citation>
    <scope>NUCLEOTIDE SEQUENCE [LARGE SCALE GENOMIC DNA]</scope>
</reference>
<reference key="5">
    <citation type="journal article" date="1999" name="Hum. Mol. Genet.">
        <title>EYA4, a novel vertebrate gene related to Drosophila eyes absent.</title>
        <authorList>
            <person name="Borsani G."/>
            <person name="DeGrandi A."/>
            <person name="Ballabio A."/>
            <person name="Bulfone A."/>
            <person name="Bernard L."/>
            <person name="Banfi S."/>
            <person name="Gattuso C."/>
            <person name="Mariani M."/>
            <person name="Dixon M."/>
            <person name="Donnai D."/>
            <person name="Metcalfe K."/>
            <person name="Winter R."/>
            <person name="Robertson M."/>
            <person name="Axton R."/>
            <person name="Brown A."/>
            <person name="van Heyningen V."/>
            <person name="Hanson I."/>
        </authorList>
    </citation>
    <scope>NUCLEOTIDE SEQUENCE [MRNA] OF 350-468</scope>
    <source>
        <tissue>Embryo</tissue>
    </source>
</reference>
<reference key="6">
    <citation type="journal article" date="1999" name="Mol. Cell. Biol.">
        <title>Cooperation of six and eya in activation of their target genes through nuclear translocation of Eya.</title>
        <authorList>
            <person name="Ohto H."/>
            <person name="Kamada S."/>
            <person name="Tago K."/>
            <person name="Tominaga S."/>
            <person name="Ozaki H."/>
            <person name="Sato S."/>
            <person name="Kawakami K."/>
        </authorList>
    </citation>
    <scope>FUNCTION</scope>
    <scope>INTERACTION WITH SIX2; SIX4 AND SIX5</scope>
    <scope>SUBCELLULAR LOCATION</scope>
</reference>
<reference key="7">
    <citation type="journal article" date="2002" name="Mol. Cell. Biol.">
        <title>Molecular interaction and synergistic activation of a promoter by Six, Eya, and Dach proteins mediated through CREB binding protein.</title>
        <authorList>
            <person name="Ikeda K."/>
            <person name="Watanabe Y."/>
            <person name="Ohto H."/>
            <person name="Kawakami K."/>
        </authorList>
    </citation>
    <scope>INTERACTION WITH SIX1; SIX2; SIX4 AND SIX5</scope>
</reference>
<reference key="8">
    <citation type="journal article" date="2003" name="Nature">
        <title>Eya protein phosphatase activity regulates Six1-Dach-Eya transcriptional effects in mammalian organogenesis.</title>
        <authorList>
            <person name="Li X."/>
            <person name="Oghi K.A."/>
            <person name="Zhang J."/>
            <person name="Krones A."/>
            <person name="Bush K.T."/>
            <person name="Glass C.K."/>
            <person name="Nigam S.K."/>
            <person name="Aggarwal A.K."/>
            <person name="Maas R."/>
            <person name="Rose D.W."/>
            <person name="Rosenfeld M.G."/>
        </authorList>
    </citation>
    <scope>CATALYTIC ACTIVITY</scope>
    <scope>INTERACTION WITH DACH1 AND SIX1</scope>
    <scope>MUTAGENESIS OF ASP-246</scope>
</reference>
<reference key="9">
    <citation type="journal article" date="2004" name="Nature">
        <authorList>
            <person name="Li X."/>
            <person name="Oghi K.A."/>
            <person name="Zhang J."/>
            <person name="Krones A."/>
            <person name="Bush K.T."/>
            <person name="Glass C.K."/>
            <person name="Nigam S.K."/>
            <person name="Aggarwal A.K."/>
            <person name="Maas R."/>
            <person name="Rose D.W."/>
            <person name="Rosenfeld M.G."/>
        </authorList>
    </citation>
    <scope>ERRATUM OF PUBMED:14628042</scope>
</reference>
<reference key="10">
    <citation type="journal article" date="2003" name="Nature">
        <title>Eyes absent represents a class of protein tyrosine phosphatases.</title>
        <authorList>
            <person name="Rayapureddi J.P."/>
            <person name="Kattamuri C."/>
            <person name="Steinmetz B.D."/>
            <person name="Frankfort B.J."/>
            <person name="Ostrin E.J."/>
            <person name="Mardon G."/>
            <person name="Hegde R.S."/>
        </authorList>
    </citation>
    <scope>CATALYTIC ACTIVITY</scope>
    <scope>SUBCELLULAR LOCATION</scope>
    <scope>MUTAGENESIS OF ASP-246; ASP-248; THR-250; THR-419; GLY-473; ASP-474 AND GLU-478</scope>
</reference>
<reference key="11">
    <citation type="journal article" date="2003" name="Nature">
        <title>The transcription factor Eyes absent is a protein tyrosine phosphatase.</title>
        <authorList>
            <person name="Tootle T.L."/>
            <person name="Silver S.J."/>
            <person name="Davies E.L."/>
            <person name="Newman V."/>
            <person name="Latek R.R."/>
            <person name="Mills I.A."/>
            <person name="Selengut J.D."/>
            <person name="Parlikar B.E."/>
            <person name="Rebay I."/>
        </authorList>
    </citation>
    <scope>CATALYTIC ACTIVITY</scope>
    <scope>MUTAGENESIS OF ASP-246; THR-420; LYS-449; ASP-474 AND GLU-478</scope>
</reference>
<reference key="12">
    <citation type="journal article" date="2007" name="Proc. Natl. Acad. Sci. U.S.A.">
        <title>Large-scale phosphorylation analysis of mouse liver.</title>
        <authorList>
            <person name="Villen J."/>
            <person name="Beausoleil S.A."/>
            <person name="Gerber S.A."/>
            <person name="Gygi S.P."/>
        </authorList>
    </citation>
    <scope>IDENTIFICATION BY MASS SPECTROMETRY [LARGE SCALE ANALYSIS]</scope>
    <source>
        <tissue>Liver</tissue>
    </source>
</reference>
<reference key="13">
    <citation type="journal article" date="2010" name="Cell">
        <title>A tissue-specific atlas of mouse protein phosphorylation and expression.</title>
        <authorList>
            <person name="Huttlin E.L."/>
            <person name="Jedrychowski M.P."/>
            <person name="Elias J.E."/>
            <person name="Goswami T."/>
            <person name="Rad R."/>
            <person name="Beausoleil S.A."/>
            <person name="Villen J."/>
            <person name="Haas W."/>
            <person name="Sowa M.E."/>
            <person name="Gygi S.P."/>
        </authorList>
    </citation>
    <scope>IDENTIFICATION BY MASS SPECTROMETRY [LARGE SCALE ANALYSIS]</scope>
    <source>
        <tissue>Lung</tissue>
        <tissue>Spleen</tissue>
        <tissue>Testis</tissue>
    </source>
</reference>
<evidence type="ECO:0000250" key="1"/>
<evidence type="ECO:0000250" key="2">
    <source>
        <dbReference type="UniProtKB" id="O00167"/>
    </source>
</evidence>
<evidence type="ECO:0000250" key="3">
    <source>
        <dbReference type="UniProtKB" id="Q99504"/>
    </source>
</evidence>
<evidence type="ECO:0000256" key="4">
    <source>
        <dbReference type="SAM" id="MobiDB-lite"/>
    </source>
</evidence>
<evidence type="ECO:0000269" key="5">
    <source>
    </source>
</evidence>
<evidence type="ECO:0000269" key="6">
    <source>
    </source>
</evidence>
<evidence type="ECO:0000269" key="7">
    <source>
    </source>
</evidence>
<evidence type="ECO:0000269" key="8">
    <source>
    </source>
</evidence>
<evidence type="ECO:0000269" key="9">
    <source>
    </source>
</evidence>
<evidence type="ECO:0000303" key="10">
    <source>
    </source>
</evidence>
<evidence type="ECO:0000305" key="11"/>